<name>RECR_OCEIH</name>
<reference key="1">
    <citation type="journal article" date="2002" name="Nucleic Acids Res.">
        <title>Genome sequence of Oceanobacillus iheyensis isolated from the Iheya Ridge and its unexpected adaptive capabilities to extreme environments.</title>
        <authorList>
            <person name="Takami H."/>
            <person name="Takaki Y."/>
            <person name="Uchiyama I."/>
        </authorList>
    </citation>
    <scope>NUCLEOTIDE SEQUENCE [LARGE SCALE GENOMIC DNA]</scope>
    <source>
        <strain>DSM 14371 / CIP 107618 / JCM 11309 / KCTC 3954 / HTE831</strain>
    </source>
</reference>
<feature type="chain" id="PRO_0000190357" description="Recombination protein RecR">
    <location>
        <begin position="1"/>
        <end position="198"/>
    </location>
</feature>
<feature type="domain" description="Toprim" evidence="1">
    <location>
        <begin position="80"/>
        <end position="175"/>
    </location>
</feature>
<feature type="zinc finger region" description="C4-type" evidence="1">
    <location>
        <begin position="57"/>
        <end position="72"/>
    </location>
</feature>
<keyword id="KW-0227">DNA damage</keyword>
<keyword id="KW-0233">DNA recombination</keyword>
<keyword id="KW-0234">DNA repair</keyword>
<keyword id="KW-0479">Metal-binding</keyword>
<keyword id="KW-1185">Reference proteome</keyword>
<keyword id="KW-0862">Zinc</keyword>
<keyword id="KW-0863">Zinc-finger</keyword>
<protein>
    <recommendedName>
        <fullName evidence="1">Recombination protein RecR</fullName>
    </recommendedName>
</protein>
<accession>Q8EU58</accession>
<organism>
    <name type="scientific">Oceanobacillus iheyensis (strain DSM 14371 / CIP 107618 / JCM 11309 / KCTC 3954 / HTE831)</name>
    <dbReference type="NCBI Taxonomy" id="221109"/>
    <lineage>
        <taxon>Bacteria</taxon>
        <taxon>Bacillati</taxon>
        <taxon>Bacillota</taxon>
        <taxon>Bacilli</taxon>
        <taxon>Bacillales</taxon>
        <taxon>Bacillaceae</taxon>
        <taxon>Oceanobacillus</taxon>
    </lineage>
</organism>
<proteinExistence type="inferred from homology"/>
<gene>
    <name evidence="1" type="primary">recR</name>
    <name type="ordered locus">OB0031</name>
</gene>
<sequence length="198" mass="21707">MYYPEPITKLIDSFSKLPGIGPKTAARLAFFVLNMKEDDVLNFANALVSAKRELSHCSVCGHITDQDPCAICTDTSRDGSLICVVQDPKDVIAMEKMKEFHGKYHVLHGAISPMDGIGPEDINVPDLINRLKDEEVEELILATNPNIEGEATAMYISRLVKPSGIRTTRIAHGLPVGGDLEYADEVTLSKALEGRRDV</sequence>
<dbReference type="EMBL" id="BA000028">
    <property type="protein sequence ID" value="BAC11987.1"/>
    <property type="molecule type" value="Genomic_DNA"/>
</dbReference>
<dbReference type="RefSeq" id="WP_011064433.1">
    <property type="nucleotide sequence ID" value="NC_004193.1"/>
</dbReference>
<dbReference type="SMR" id="Q8EU58"/>
<dbReference type="STRING" id="221109.gene:10732193"/>
<dbReference type="KEGG" id="oih:OB0031"/>
<dbReference type="eggNOG" id="COG0353">
    <property type="taxonomic scope" value="Bacteria"/>
</dbReference>
<dbReference type="HOGENOM" id="CLU_060739_1_0_9"/>
<dbReference type="OrthoDB" id="9802672at2"/>
<dbReference type="PhylomeDB" id="Q8EU58"/>
<dbReference type="Proteomes" id="UP000000822">
    <property type="component" value="Chromosome"/>
</dbReference>
<dbReference type="GO" id="GO:0003677">
    <property type="term" value="F:DNA binding"/>
    <property type="evidence" value="ECO:0007669"/>
    <property type="project" value="UniProtKB-UniRule"/>
</dbReference>
<dbReference type="GO" id="GO:0008270">
    <property type="term" value="F:zinc ion binding"/>
    <property type="evidence" value="ECO:0007669"/>
    <property type="project" value="UniProtKB-KW"/>
</dbReference>
<dbReference type="GO" id="GO:0006310">
    <property type="term" value="P:DNA recombination"/>
    <property type="evidence" value="ECO:0007669"/>
    <property type="project" value="UniProtKB-UniRule"/>
</dbReference>
<dbReference type="GO" id="GO:0006281">
    <property type="term" value="P:DNA repair"/>
    <property type="evidence" value="ECO:0007669"/>
    <property type="project" value="UniProtKB-UniRule"/>
</dbReference>
<dbReference type="CDD" id="cd01025">
    <property type="entry name" value="TOPRIM_recR"/>
    <property type="match status" value="1"/>
</dbReference>
<dbReference type="Gene3D" id="3.30.60.80">
    <property type="match status" value="1"/>
</dbReference>
<dbReference type="Gene3D" id="3.40.1360.10">
    <property type="match status" value="1"/>
</dbReference>
<dbReference type="Gene3D" id="6.10.250.240">
    <property type="match status" value="1"/>
</dbReference>
<dbReference type="Gene3D" id="1.10.8.420">
    <property type="entry name" value="RecR Domain 1"/>
    <property type="match status" value="1"/>
</dbReference>
<dbReference type="HAMAP" id="MF_00017">
    <property type="entry name" value="RecR"/>
    <property type="match status" value="1"/>
</dbReference>
<dbReference type="InterPro" id="IPR000093">
    <property type="entry name" value="DNA_Rcmb_RecR"/>
</dbReference>
<dbReference type="InterPro" id="IPR023627">
    <property type="entry name" value="Rcmb_RecR"/>
</dbReference>
<dbReference type="InterPro" id="IPR015967">
    <property type="entry name" value="Rcmb_RecR_Znf"/>
</dbReference>
<dbReference type="InterPro" id="IPR006171">
    <property type="entry name" value="TOPRIM_dom"/>
</dbReference>
<dbReference type="InterPro" id="IPR034137">
    <property type="entry name" value="TOPRIM_RecR"/>
</dbReference>
<dbReference type="NCBIfam" id="TIGR00615">
    <property type="entry name" value="recR"/>
    <property type="match status" value="1"/>
</dbReference>
<dbReference type="PANTHER" id="PTHR30446">
    <property type="entry name" value="RECOMBINATION PROTEIN RECR"/>
    <property type="match status" value="1"/>
</dbReference>
<dbReference type="PANTHER" id="PTHR30446:SF0">
    <property type="entry name" value="RECOMBINATION PROTEIN RECR"/>
    <property type="match status" value="1"/>
</dbReference>
<dbReference type="Pfam" id="PF21175">
    <property type="entry name" value="RecR_C"/>
    <property type="match status" value="1"/>
</dbReference>
<dbReference type="Pfam" id="PF21176">
    <property type="entry name" value="RecR_HhH"/>
    <property type="match status" value="1"/>
</dbReference>
<dbReference type="Pfam" id="PF02132">
    <property type="entry name" value="RecR_ZnF"/>
    <property type="match status" value="1"/>
</dbReference>
<dbReference type="Pfam" id="PF13662">
    <property type="entry name" value="Toprim_4"/>
    <property type="match status" value="1"/>
</dbReference>
<dbReference type="SMART" id="SM00493">
    <property type="entry name" value="TOPRIM"/>
    <property type="match status" value="1"/>
</dbReference>
<dbReference type="SUPFAM" id="SSF111304">
    <property type="entry name" value="Recombination protein RecR"/>
    <property type="match status" value="1"/>
</dbReference>
<dbReference type="PROSITE" id="PS01300">
    <property type="entry name" value="RECR"/>
    <property type="match status" value="1"/>
</dbReference>
<dbReference type="PROSITE" id="PS50880">
    <property type="entry name" value="TOPRIM"/>
    <property type="match status" value="1"/>
</dbReference>
<evidence type="ECO:0000255" key="1">
    <source>
        <dbReference type="HAMAP-Rule" id="MF_00017"/>
    </source>
</evidence>
<comment type="function">
    <text evidence="1">May play a role in DNA repair. It seems to be involved in an RecBC-independent recombinational process of DNA repair. It may act with RecF and RecO.</text>
</comment>
<comment type="similarity">
    <text evidence="1">Belongs to the RecR family.</text>
</comment>